<sequence length="251" mass="28502">LACAGLVMGLAVVPFGASHILMNMWNFGNFWCEFWTSIDVLCVTASIETLCVIAVDRYIAITAPFKYQSLLTKNKARVVILMVWIVSGLTSFLPIQMHWYRATNKEAITCYTNETCCDFFTNQAYAIASSIVSFYVPLVVMVFVYSRVFQVAKRQLQKIDKSEGRFHAQNLSQVEQDGRSGHGLRRSSKFCLKEHKALKTLGIIMGTFTLCWLPFFIVNVVHAIKENLIPKEVYILLNWLGYVNSAFNPLI</sequence>
<accession>O70431</accession>
<reference key="1">
    <citation type="journal article" date="1999" name="J. Membr. Biol.">
        <title>Beta1-adrenergic receptors but not beta2-adrenergic or vasopressin receptors regulate K+ secretion in vestibular dark cells of the inner ear.</title>
        <authorList>
            <person name="Wangemann P."/>
            <person name="Liu J."/>
            <person name="Shimozono M."/>
            <person name="Scofield M.A."/>
        </authorList>
    </citation>
    <scope>NUCLEOTIDE SEQUENCE [MRNA]</scope>
    <source>
        <tissue>Adipose tissue</tissue>
        <tissue>Brain</tissue>
        <tissue>Stria vascularis</tissue>
    </source>
</reference>
<keyword id="KW-1003">Cell membrane</keyword>
<keyword id="KW-1015">Disulfide bond</keyword>
<keyword id="KW-0967">Endosome</keyword>
<keyword id="KW-0297">G-protein coupled receptor</keyword>
<keyword id="KW-0333">Golgi apparatus</keyword>
<keyword id="KW-0449">Lipoprotein</keyword>
<keyword id="KW-0472">Membrane</keyword>
<keyword id="KW-0564">Palmitate</keyword>
<keyword id="KW-0597">Phosphoprotein</keyword>
<keyword id="KW-0675">Receptor</keyword>
<keyword id="KW-0807">Transducer</keyword>
<keyword id="KW-0812">Transmembrane</keyword>
<keyword id="KW-1133">Transmembrane helix</keyword>
<keyword id="KW-0832">Ubl conjugation</keyword>
<name>ADRB2_MERUN</name>
<gene>
    <name type="primary">ADRB2</name>
</gene>
<protein>
    <recommendedName>
        <fullName>Beta-2 adrenergic receptor</fullName>
    </recommendedName>
    <alternativeName>
        <fullName>Beta-2 adrenoreceptor</fullName>
        <shortName>Beta-2 adrenoceptor</shortName>
    </alternativeName>
</protein>
<evidence type="ECO:0000250" key="1"/>
<evidence type="ECO:0000250" key="2">
    <source>
        <dbReference type="UniProtKB" id="P07550"/>
    </source>
</evidence>
<evidence type="ECO:0000255" key="3"/>
<evidence type="ECO:0000255" key="4">
    <source>
        <dbReference type="PROSITE-ProRule" id="PRU00521"/>
    </source>
</evidence>
<comment type="function">
    <text evidence="2">Beta-adrenergic receptors mediate the catecholamine-induced activation of adenylate cyclase through the action of G proteins. The beta-2-adrenergic receptor binds epinephrine with an approximately 30-fold greater affinity than it does norepinephrine (By similarity).</text>
</comment>
<comment type="subunit">
    <text evidence="2">Binds NHERF1 and GPRASP1. Interacts with ARRB1 and ARRB2. Interacts with SRC (By similarity). Interacts with USP20 and USP33 (By similarity). Interacts with VHL; the interaction, which is increased on hydroxylation of ADRB2, ubiquitinates ADRB2 leading to its degradation. Interacts with EGLN3; the interaction hydroxylates ADRB2 facilitating VHL-E3 ligase-mediated ubiquitination. Interacts (via PDZ-binding motif) with SNX27 (via PDZ domain); the interaction is required when endocytosed to prevent degradation in lysosomes and promote recycling to the plasma membrane. Interacts with CNIH4. Interacts with ARRDC3. Interacts with NEDD4 (By similarity). Interacts with MARCHF2 (By similarity).</text>
</comment>
<comment type="subcellular location">
    <subcellularLocation>
        <location evidence="2">Cell membrane</location>
        <topology evidence="2">Multi-pass membrane protein</topology>
    </subcellularLocation>
    <subcellularLocation>
        <location evidence="2">Early endosome</location>
    </subcellularLocation>
    <subcellularLocation>
        <location evidence="2">Golgi apparatus</location>
    </subcellularLocation>
    <text evidence="2">Colocalizes with VHL at the cell membrane. Activated receptors are internalized into endosomes prior to their degradation in lysosomes. Activated receptors are also detected within the Golgi apparatus.</text>
</comment>
<comment type="PTM">
    <text>Phosphorylated by PKA and BARK upon agonist stimulation, which mediates homologous desensitization of the receptor. PKA-mediated phosphorylation seems to facilitate phosphorylation by BARK.</text>
</comment>
<comment type="PTM">
    <text evidence="1">Phosphorylation of Tyr-67 is induced by insulin and leads to supersensitization of the receptor.</text>
</comment>
<comment type="PTM">
    <text evidence="1">Ubiquitinated. Agonist-induced ubiquitination leads to sort internalized receptors to the lysosomes for degradation. Deubiquitination by USP20 and USP33, leads to ADRB2 recycling and resensitization after prolonged agonist stimulation. USP20 and USP33 are constitutively associated and are dissociated immediately after agonist stimulation (By similarity).</text>
</comment>
<comment type="PTM">
    <text evidence="2">Palmitoylated.</text>
</comment>
<comment type="similarity">
    <text evidence="4">Belongs to the G-protein coupled receptor 1 family. Adrenergic receptor subfamily. ADRB2 sub-subfamily.</text>
</comment>
<organism>
    <name type="scientific">Meriones unguiculatus</name>
    <name type="common">Mongolian jird</name>
    <name type="synonym">Gerbillus unguiculatus</name>
    <dbReference type="NCBI Taxonomy" id="10047"/>
    <lineage>
        <taxon>Eukaryota</taxon>
        <taxon>Metazoa</taxon>
        <taxon>Chordata</taxon>
        <taxon>Craniata</taxon>
        <taxon>Vertebrata</taxon>
        <taxon>Euteleostomi</taxon>
        <taxon>Mammalia</taxon>
        <taxon>Eutheria</taxon>
        <taxon>Euarchontoglires</taxon>
        <taxon>Glires</taxon>
        <taxon>Rodentia</taxon>
        <taxon>Myomorpha</taxon>
        <taxon>Muroidea</taxon>
        <taxon>Muridae</taxon>
        <taxon>Gerbillinae</taxon>
        <taxon>Meriones</taxon>
    </lineage>
</organism>
<dbReference type="EMBL" id="AF055350">
    <property type="protein sequence ID" value="AAC12768.1"/>
    <property type="molecule type" value="mRNA"/>
</dbReference>
<dbReference type="SMR" id="O70431"/>
<dbReference type="GO" id="GO:0005769">
    <property type="term" value="C:early endosome"/>
    <property type="evidence" value="ECO:0007669"/>
    <property type="project" value="UniProtKB-SubCell"/>
</dbReference>
<dbReference type="GO" id="GO:0005794">
    <property type="term" value="C:Golgi apparatus"/>
    <property type="evidence" value="ECO:0007669"/>
    <property type="project" value="UniProtKB-SubCell"/>
</dbReference>
<dbReference type="GO" id="GO:0005886">
    <property type="term" value="C:plasma membrane"/>
    <property type="evidence" value="ECO:0007669"/>
    <property type="project" value="UniProtKB-SubCell"/>
</dbReference>
<dbReference type="GO" id="GO:0004941">
    <property type="term" value="F:beta2-adrenergic receptor activity"/>
    <property type="evidence" value="ECO:0007669"/>
    <property type="project" value="InterPro"/>
</dbReference>
<dbReference type="GO" id="GO:0051380">
    <property type="term" value="F:norepinephrine binding"/>
    <property type="evidence" value="ECO:0007669"/>
    <property type="project" value="TreeGrafter"/>
</dbReference>
<dbReference type="GO" id="GO:0071880">
    <property type="term" value="P:adenylate cyclase-activating adrenergic receptor signaling pathway"/>
    <property type="evidence" value="ECO:0007669"/>
    <property type="project" value="TreeGrafter"/>
</dbReference>
<dbReference type="GO" id="GO:0002025">
    <property type="term" value="P:norepinephrine-epinephrine-mediated vasodilation involved in regulation of systemic arterial blood pressure"/>
    <property type="evidence" value="ECO:0007669"/>
    <property type="project" value="TreeGrafter"/>
</dbReference>
<dbReference type="GO" id="GO:1901098">
    <property type="term" value="P:positive regulation of autophagosome maturation"/>
    <property type="evidence" value="ECO:0000250"/>
    <property type="project" value="GO_Central"/>
</dbReference>
<dbReference type="GO" id="GO:1904504">
    <property type="term" value="P:positive regulation of lipophagy"/>
    <property type="evidence" value="ECO:0000250"/>
    <property type="project" value="GO_Central"/>
</dbReference>
<dbReference type="GO" id="GO:0043410">
    <property type="term" value="P:positive regulation of MAPK cascade"/>
    <property type="evidence" value="ECO:0007669"/>
    <property type="project" value="TreeGrafter"/>
</dbReference>
<dbReference type="GO" id="GO:0006940">
    <property type="term" value="P:regulation of smooth muscle contraction"/>
    <property type="evidence" value="ECO:0007669"/>
    <property type="project" value="InterPro"/>
</dbReference>
<dbReference type="Gene3D" id="1.20.1070.10">
    <property type="entry name" value="Rhodopsin 7-helix transmembrane proteins"/>
    <property type="match status" value="1"/>
</dbReference>
<dbReference type="InterPro" id="IPR000332">
    <property type="entry name" value="ADRB2_rcpt"/>
</dbReference>
<dbReference type="InterPro" id="IPR000276">
    <property type="entry name" value="GPCR_Rhodpsn"/>
</dbReference>
<dbReference type="InterPro" id="IPR017452">
    <property type="entry name" value="GPCR_Rhodpsn_7TM"/>
</dbReference>
<dbReference type="PANTHER" id="PTHR24248">
    <property type="entry name" value="ADRENERGIC RECEPTOR-RELATED G-PROTEIN COUPLED RECEPTOR"/>
    <property type="match status" value="1"/>
</dbReference>
<dbReference type="PANTHER" id="PTHR24248:SF21">
    <property type="entry name" value="BETA-2 ADRENERGIC RECEPTOR"/>
    <property type="match status" value="1"/>
</dbReference>
<dbReference type="Pfam" id="PF00001">
    <property type="entry name" value="7tm_1"/>
    <property type="match status" value="1"/>
</dbReference>
<dbReference type="PRINTS" id="PR00562">
    <property type="entry name" value="ADRENRGCB2AR"/>
</dbReference>
<dbReference type="PRINTS" id="PR00237">
    <property type="entry name" value="GPCRRHODOPSN"/>
</dbReference>
<dbReference type="SUPFAM" id="SSF81321">
    <property type="entry name" value="Family A G protein-coupled receptor-like"/>
    <property type="match status" value="1"/>
</dbReference>
<dbReference type="PROSITE" id="PS00237">
    <property type="entry name" value="G_PROTEIN_RECEP_F1_1"/>
    <property type="match status" value="1"/>
</dbReference>
<dbReference type="PROSITE" id="PS50262">
    <property type="entry name" value="G_PROTEIN_RECEP_F1_2"/>
    <property type="match status" value="1"/>
</dbReference>
<feature type="chain" id="PRO_0000069132" description="Beta-2 adrenergic receptor">
    <location>
        <begin position="1" status="less than"/>
        <end position="251" status="greater than"/>
    </location>
</feature>
<feature type="transmembrane region" description="Helical; Name=2" evidence="1">
    <location>
        <begin position="1" status="less than"/>
        <end position="21"/>
    </location>
</feature>
<feature type="topological domain" description="Extracellular" evidence="1">
    <location>
        <begin position="22"/>
        <end position="32"/>
    </location>
</feature>
<feature type="transmembrane region" description="Helical; Name=3" evidence="1">
    <location>
        <begin position="33"/>
        <end position="55"/>
    </location>
</feature>
<feature type="topological domain" description="Cytoplasmic" evidence="1">
    <location>
        <begin position="56"/>
        <end position="76"/>
    </location>
</feature>
<feature type="transmembrane region" description="Helical; Name=4" evidence="1">
    <location>
        <begin position="77"/>
        <end position="100"/>
    </location>
</feature>
<feature type="topological domain" description="Extracellular" evidence="1">
    <location>
        <begin position="101"/>
        <end position="122"/>
    </location>
</feature>
<feature type="transmembrane region" description="Helical; Name=5" evidence="1">
    <location>
        <begin position="123"/>
        <end position="146"/>
    </location>
</feature>
<feature type="topological domain" description="Cytoplasmic" evidence="1">
    <location>
        <begin position="147"/>
        <end position="200"/>
    </location>
</feature>
<feature type="transmembrane region" description="Helical; Name=6" evidence="1">
    <location>
        <begin position="201"/>
        <end position="224"/>
    </location>
</feature>
<feature type="topological domain" description="Extracellular" evidence="1">
    <location>
        <begin position="225"/>
        <end position="231"/>
    </location>
</feature>
<feature type="transmembrane region" description="Helical; Name=7" evidence="1">
    <location>
        <begin position="232"/>
        <end position="251" status="greater than"/>
    </location>
</feature>
<feature type="modified residue" description="Phosphotyrosine" evidence="2">
    <location>
        <position position="67"/>
    </location>
</feature>
<feature type="modified residue" description="Phosphoserine" evidence="2">
    <location>
        <position position="172"/>
    </location>
</feature>
<feature type="modified residue" description="Phosphoserine; by PKA" evidence="3">
    <location>
        <position position="187"/>
    </location>
</feature>
<feature type="modified residue" description="Phosphoserine; by PKA" evidence="3">
    <location>
        <position position="188"/>
    </location>
</feature>
<feature type="lipid moiety-binding region" description="S-palmitoyl cysteine" evidence="2">
    <location>
        <position position="191"/>
    </location>
</feature>
<feature type="disulfide bond" evidence="4">
    <location>
        <begin position="32"/>
        <end position="117"/>
    </location>
</feature>
<feature type="disulfide bond" evidence="4">
    <location>
        <begin position="110"/>
        <end position="116"/>
    </location>
</feature>
<feature type="non-terminal residue">
    <location>
        <position position="1"/>
    </location>
</feature>
<feature type="non-terminal residue">
    <location>
        <position position="251"/>
    </location>
</feature>
<proteinExistence type="evidence at transcript level"/>